<comment type="function">
    <text>Aquaporins facilitate the transport of water and small neutral solutes across cell membranes. May have a role in buffering osmotic fluctations in the highly compartmented vacuole of arbuscule cells.</text>
</comment>
<comment type="subcellular location">
    <subcellularLocation>
        <location evidence="2">Membrane</location>
        <topology evidence="2">Multi-pass membrane protein</topology>
    </subcellularLocation>
</comment>
<comment type="domain">
    <text>Aquaporins contain two tandem repeats each containing three membrane-spanning domains and a pore-forming loop with the signature motif Asn-Pro-Ala (NPA).</text>
</comment>
<comment type="similarity">
    <text evidence="2">Belongs to the MIP/aquaporin (TC 1.A.8) family. TIP (TC 1.A.8.10) subfamily.</text>
</comment>
<protein>
    <recommendedName>
        <fullName>Probable aquaporin TIP-type</fullName>
    </recommendedName>
    <alternativeName>
        <fullName>MtAQP1</fullName>
    </alternativeName>
</protein>
<feature type="chain" id="PRO_0000064020" description="Probable aquaporin TIP-type">
    <location>
        <begin position="1"/>
        <end position="250"/>
    </location>
</feature>
<feature type="transmembrane region" description="Helical; Name=1" evidence="1">
    <location>
        <begin position="22"/>
        <end position="42"/>
    </location>
</feature>
<feature type="transmembrane region" description="Helical; Name=2" evidence="1">
    <location>
        <begin position="56"/>
        <end position="76"/>
    </location>
</feature>
<feature type="transmembrane region" description="Helical; Name=3" evidence="1">
    <location>
        <begin position="104"/>
        <end position="124"/>
    </location>
</feature>
<feature type="transmembrane region" description="Helical; Name=4" evidence="1">
    <location>
        <begin position="138"/>
        <end position="158"/>
    </location>
</feature>
<feature type="transmembrane region" description="Helical; Name=5" evidence="1">
    <location>
        <begin position="170"/>
        <end position="190"/>
    </location>
</feature>
<feature type="transmembrane region" description="Helical; Name=6" evidence="1">
    <location>
        <begin position="218"/>
        <end position="238"/>
    </location>
</feature>
<feature type="short sequence motif" description="NPA 1">
    <location>
        <begin position="85"/>
        <end position="87"/>
    </location>
</feature>
<feature type="short sequence motif" description="NPA 2">
    <location>
        <begin position="198"/>
        <end position="200"/>
    </location>
</feature>
<evidence type="ECO:0000255" key="1"/>
<evidence type="ECO:0000305" key="2"/>
<accession>Q9FY14</accession>
<reference key="1">
    <citation type="journal article" date="2000" name="Planta">
        <title>Arbuscular mycorrhiza development regulates the mRNA abundance of Mtaqp1 encoding a mercury-insensitive aquaporin of Medicago truncatula.</title>
        <authorList>
            <person name="Krajinski F."/>
            <person name="Biela A."/>
            <person name="Schubert D."/>
            <person name="Gianinazzi-Pearson V."/>
            <person name="Kaldenhoff R."/>
            <person name="Franken P."/>
        </authorList>
    </citation>
    <scope>NUCLEOTIDE SEQUENCE [MRNA]</scope>
    <scope>CHARACTERIZATION</scope>
    <source>
        <strain>cv. Jemalong</strain>
        <tissue>Arbuscular mycorrhiza</tissue>
    </source>
</reference>
<sequence>MPIRNIAVGTPQEATHPDTLKAGLAEFISTFIFVFAGSGSGIAYNKLTNDGAATPAGLISASIAHAFALFVAVSVGANISGGHVNPAVTFGAFVGGNITLLRGIVYIIAQLLGSIVASALLVFVTASSVPAFGLSEGVGVGPALVLEIVMTFGLVYTVYATAVDPKKGNIGIIAPIAIGFIVGANILVGGAFTGASMNPAVSFGPAVVSWSWSNHWVYWAGPLIGGGIAGLVYEVLFINSTHEQLPTTDY</sequence>
<name>TIP1_MEDTR</name>
<gene>
    <name type="primary">AQP1</name>
</gene>
<dbReference type="EMBL" id="AJ251652">
    <property type="protein sequence ID" value="CAC01618.1"/>
    <property type="molecule type" value="mRNA"/>
</dbReference>
<dbReference type="SMR" id="Q9FY14"/>
<dbReference type="EnsemblPlants" id="rna43278">
    <property type="protein sequence ID" value="RHN48548.1"/>
    <property type="gene ID" value="gene43278"/>
</dbReference>
<dbReference type="GeneID" id="25499345"/>
<dbReference type="Gramene" id="rna43278">
    <property type="protein sequence ID" value="RHN48548.1"/>
    <property type="gene ID" value="gene43278"/>
</dbReference>
<dbReference type="KEGG" id="mtr:25499345"/>
<dbReference type="HOGENOM" id="CLU_020019_3_4_1"/>
<dbReference type="OrthoDB" id="3222at2759"/>
<dbReference type="ExpressionAtlas" id="Q9FY14">
    <property type="expression patterns" value="differential"/>
</dbReference>
<dbReference type="GO" id="GO:0016020">
    <property type="term" value="C:membrane"/>
    <property type="evidence" value="ECO:0007669"/>
    <property type="project" value="UniProtKB-SubCell"/>
</dbReference>
<dbReference type="GO" id="GO:0015267">
    <property type="term" value="F:channel activity"/>
    <property type="evidence" value="ECO:0007669"/>
    <property type="project" value="InterPro"/>
</dbReference>
<dbReference type="CDD" id="cd00333">
    <property type="entry name" value="MIP"/>
    <property type="match status" value="1"/>
</dbReference>
<dbReference type="FunFam" id="1.20.1080.10:FF:000002">
    <property type="entry name" value="Probable aquaporin TIP1-1"/>
    <property type="match status" value="1"/>
</dbReference>
<dbReference type="Gene3D" id="1.20.1080.10">
    <property type="entry name" value="Glycerol uptake facilitator protein"/>
    <property type="match status" value="1"/>
</dbReference>
<dbReference type="InterPro" id="IPR023271">
    <property type="entry name" value="Aquaporin-like"/>
</dbReference>
<dbReference type="InterPro" id="IPR034294">
    <property type="entry name" value="Aquaporin_transptr"/>
</dbReference>
<dbReference type="InterPro" id="IPR000425">
    <property type="entry name" value="MIP"/>
</dbReference>
<dbReference type="InterPro" id="IPR022357">
    <property type="entry name" value="MIP_CS"/>
</dbReference>
<dbReference type="PANTHER" id="PTHR45665:SF54">
    <property type="entry name" value="AQUAPORIN TIP1-1"/>
    <property type="match status" value="1"/>
</dbReference>
<dbReference type="PANTHER" id="PTHR45665">
    <property type="entry name" value="AQUAPORIN-8"/>
    <property type="match status" value="1"/>
</dbReference>
<dbReference type="Pfam" id="PF00230">
    <property type="entry name" value="MIP"/>
    <property type="match status" value="1"/>
</dbReference>
<dbReference type="PRINTS" id="PR00783">
    <property type="entry name" value="MINTRINSICP"/>
</dbReference>
<dbReference type="SUPFAM" id="SSF81338">
    <property type="entry name" value="Aquaporin-like"/>
    <property type="match status" value="1"/>
</dbReference>
<dbReference type="PROSITE" id="PS00221">
    <property type="entry name" value="MIP"/>
    <property type="match status" value="1"/>
</dbReference>
<keyword id="KW-0472">Membrane</keyword>
<keyword id="KW-0677">Repeat</keyword>
<keyword id="KW-0812">Transmembrane</keyword>
<keyword id="KW-1133">Transmembrane helix</keyword>
<keyword id="KW-0813">Transport</keyword>
<proteinExistence type="evidence at protein level"/>
<organism>
    <name type="scientific">Medicago truncatula</name>
    <name type="common">Barrel medic</name>
    <name type="synonym">Medicago tribuloides</name>
    <dbReference type="NCBI Taxonomy" id="3880"/>
    <lineage>
        <taxon>Eukaryota</taxon>
        <taxon>Viridiplantae</taxon>
        <taxon>Streptophyta</taxon>
        <taxon>Embryophyta</taxon>
        <taxon>Tracheophyta</taxon>
        <taxon>Spermatophyta</taxon>
        <taxon>Magnoliopsida</taxon>
        <taxon>eudicotyledons</taxon>
        <taxon>Gunneridae</taxon>
        <taxon>Pentapetalae</taxon>
        <taxon>rosids</taxon>
        <taxon>fabids</taxon>
        <taxon>Fabales</taxon>
        <taxon>Fabaceae</taxon>
        <taxon>Papilionoideae</taxon>
        <taxon>50 kb inversion clade</taxon>
        <taxon>NPAAA clade</taxon>
        <taxon>Hologalegina</taxon>
        <taxon>IRL clade</taxon>
        <taxon>Trifolieae</taxon>
        <taxon>Medicago</taxon>
    </lineage>
</organism>